<dbReference type="EC" id="3.5.4.12"/>
<dbReference type="EMBL" id="AE014296">
    <property type="protein sequence ID" value="AAF49046.1"/>
    <property type="molecule type" value="Genomic_DNA"/>
</dbReference>
<dbReference type="EMBL" id="AE014296">
    <property type="protein sequence ID" value="AAN11625.1"/>
    <property type="molecule type" value="Genomic_DNA"/>
</dbReference>
<dbReference type="EMBL" id="BT011479">
    <property type="protein sequence ID" value="AAR99137.1"/>
    <property type="molecule type" value="mRNA"/>
</dbReference>
<dbReference type="RefSeq" id="NP_649197.1">
    <property type="nucleotide sequence ID" value="NM_140940.3"/>
</dbReference>
<dbReference type="RefSeq" id="NP_730502.1">
    <property type="nucleotide sequence ID" value="NM_168838.3"/>
</dbReference>
<dbReference type="SMR" id="Q9VWA2"/>
<dbReference type="BioGRID" id="65486">
    <property type="interactions" value="4"/>
</dbReference>
<dbReference type="DIP" id="DIP-23043N"/>
<dbReference type="FunCoup" id="Q9VWA2">
    <property type="interactions" value="738"/>
</dbReference>
<dbReference type="IntAct" id="Q9VWA2">
    <property type="interactions" value="2"/>
</dbReference>
<dbReference type="STRING" id="7227.FBpp0074597"/>
<dbReference type="PaxDb" id="7227-FBpp0074597"/>
<dbReference type="DNASU" id="40222"/>
<dbReference type="EnsemblMetazoa" id="FBtr0074828">
    <property type="protein sequence ID" value="FBpp0074597"/>
    <property type="gene ID" value="FBgn0036959"/>
</dbReference>
<dbReference type="EnsemblMetazoa" id="FBtr0074829">
    <property type="protein sequence ID" value="FBpp0074598"/>
    <property type="gene ID" value="FBgn0036959"/>
</dbReference>
<dbReference type="GeneID" id="40222"/>
<dbReference type="KEGG" id="dme:Dmel_CG6951"/>
<dbReference type="UCSC" id="CG6951-RA">
    <property type="organism name" value="d. melanogaster"/>
</dbReference>
<dbReference type="AGR" id="FB:FBgn0036959"/>
<dbReference type="FlyBase" id="FBgn0036959">
    <property type="gene designation" value="CG6951"/>
</dbReference>
<dbReference type="VEuPathDB" id="VectorBase:FBgn0036959"/>
<dbReference type="eggNOG" id="KOG3127">
    <property type="taxonomic scope" value="Eukaryota"/>
</dbReference>
<dbReference type="GeneTree" id="ENSGT00940000153676"/>
<dbReference type="HOGENOM" id="CLU_047993_1_1_1"/>
<dbReference type="InParanoid" id="Q9VWA2"/>
<dbReference type="OMA" id="HCEEVGC"/>
<dbReference type="OrthoDB" id="6710946at2759"/>
<dbReference type="PhylomeDB" id="Q9VWA2"/>
<dbReference type="BioGRID-ORCS" id="40222">
    <property type="hits" value="0 hits in 1 CRISPR screen"/>
</dbReference>
<dbReference type="GenomeRNAi" id="40222"/>
<dbReference type="PRO" id="PR:Q9VWA2"/>
<dbReference type="Proteomes" id="UP000000803">
    <property type="component" value="Chromosome 3L"/>
</dbReference>
<dbReference type="Bgee" id="FBgn0036959">
    <property type="expression patterns" value="Expressed in germline cell (Drosophila) in post-embryonic organism and 36 other cell types or tissues"/>
</dbReference>
<dbReference type="ExpressionAtlas" id="Q9VWA2">
    <property type="expression patterns" value="baseline and differential"/>
</dbReference>
<dbReference type="GO" id="GO:0005737">
    <property type="term" value="C:cytoplasm"/>
    <property type="evidence" value="ECO:0000318"/>
    <property type="project" value="GO_Central"/>
</dbReference>
<dbReference type="GO" id="GO:0004132">
    <property type="term" value="F:dCMP deaminase activity"/>
    <property type="evidence" value="ECO:0000250"/>
    <property type="project" value="FlyBase"/>
</dbReference>
<dbReference type="GO" id="GO:0008270">
    <property type="term" value="F:zinc ion binding"/>
    <property type="evidence" value="ECO:0007669"/>
    <property type="project" value="InterPro"/>
</dbReference>
<dbReference type="GO" id="GO:0009972">
    <property type="term" value="P:cytidine deamination"/>
    <property type="evidence" value="ECO:0000318"/>
    <property type="project" value="GO_Central"/>
</dbReference>
<dbReference type="GO" id="GO:0006231">
    <property type="term" value="P:dTMP biosynthetic process"/>
    <property type="evidence" value="ECO:0000318"/>
    <property type="project" value="GO_Central"/>
</dbReference>
<dbReference type="GO" id="GO:0006226">
    <property type="term" value="P:dUMP biosynthetic process"/>
    <property type="evidence" value="ECO:0000318"/>
    <property type="project" value="GO_Central"/>
</dbReference>
<dbReference type="CDD" id="cd01286">
    <property type="entry name" value="deoxycytidylate_deaminase"/>
    <property type="match status" value="1"/>
</dbReference>
<dbReference type="FunFam" id="3.40.140.10:FF:000021">
    <property type="entry name" value="Deoxycytidylate deaminase"/>
    <property type="match status" value="1"/>
</dbReference>
<dbReference type="Gene3D" id="3.40.140.10">
    <property type="entry name" value="Cytidine Deaminase, domain 2"/>
    <property type="match status" value="1"/>
</dbReference>
<dbReference type="InterPro" id="IPR016192">
    <property type="entry name" value="APOBEC/CMP_deaminase_Zn-bd"/>
</dbReference>
<dbReference type="InterPro" id="IPR002125">
    <property type="entry name" value="CMP_dCMP_dom"/>
</dbReference>
<dbReference type="InterPro" id="IPR016193">
    <property type="entry name" value="Cytidine_deaminase-like"/>
</dbReference>
<dbReference type="InterPro" id="IPR015517">
    <property type="entry name" value="dCMP_deaminase-rel"/>
</dbReference>
<dbReference type="InterPro" id="IPR035105">
    <property type="entry name" value="Deoxycytidylate_deaminase_dom"/>
</dbReference>
<dbReference type="PANTHER" id="PTHR11086:SF18">
    <property type="entry name" value="DEOXYCYTIDYLATE DEAMINASE"/>
    <property type="match status" value="1"/>
</dbReference>
<dbReference type="PANTHER" id="PTHR11086">
    <property type="entry name" value="DEOXYCYTIDYLATE DEAMINASE-RELATED"/>
    <property type="match status" value="1"/>
</dbReference>
<dbReference type="Pfam" id="PF00383">
    <property type="entry name" value="dCMP_cyt_deam_1"/>
    <property type="match status" value="1"/>
</dbReference>
<dbReference type="SUPFAM" id="SSF53927">
    <property type="entry name" value="Cytidine deaminase-like"/>
    <property type="match status" value="1"/>
</dbReference>
<dbReference type="PROSITE" id="PS00903">
    <property type="entry name" value="CYT_DCMP_DEAMINASES_1"/>
    <property type="match status" value="1"/>
</dbReference>
<dbReference type="PROSITE" id="PS51747">
    <property type="entry name" value="CYT_DCMP_DEAMINASES_2"/>
    <property type="match status" value="1"/>
</dbReference>
<reference key="1">
    <citation type="journal article" date="2000" name="Science">
        <title>The genome sequence of Drosophila melanogaster.</title>
        <authorList>
            <person name="Adams M.D."/>
            <person name="Celniker S.E."/>
            <person name="Holt R.A."/>
            <person name="Evans C.A."/>
            <person name="Gocayne J.D."/>
            <person name="Amanatides P.G."/>
            <person name="Scherer S.E."/>
            <person name="Li P.W."/>
            <person name="Hoskins R.A."/>
            <person name="Galle R.F."/>
            <person name="George R.A."/>
            <person name="Lewis S.E."/>
            <person name="Richards S."/>
            <person name="Ashburner M."/>
            <person name="Henderson S.N."/>
            <person name="Sutton G.G."/>
            <person name="Wortman J.R."/>
            <person name="Yandell M.D."/>
            <person name="Zhang Q."/>
            <person name="Chen L.X."/>
            <person name="Brandon R.C."/>
            <person name="Rogers Y.-H.C."/>
            <person name="Blazej R.G."/>
            <person name="Champe M."/>
            <person name="Pfeiffer B.D."/>
            <person name="Wan K.H."/>
            <person name="Doyle C."/>
            <person name="Baxter E.G."/>
            <person name="Helt G."/>
            <person name="Nelson C.R."/>
            <person name="Miklos G.L.G."/>
            <person name="Abril J.F."/>
            <person name="Agbayani A."/>
            <person name="An H.-J."/>
            <person name="Andrews-Pfannkoch C."/>
            <person name="Baldwin D."/>
            <person name="Ballew R.M."/>
            <person name="Basu A."/>
            <person name="Baxendale J."/>
            <person name="Bayraktaroglu L."/>
            <person name="Beasley E.M."/>
            <person name="Beeson K.Y."/>
            <person name="Benos P.V."/>
            <person name="Berman B.P."/>
            <person name="Bhandari D."/>
            <person name="Bolshakov S."/>
            <person name="Borkova D."/>
            <person name="Botchan M.R."/>
            <person name="Bouck J."/>
            <person name="Brokstein P."/>
            <person name="Brottier P."/>
            <person name="Burtis K.C."/>
            <person name="Busam D.A."/>
            <person name="Butler H."/>
            <person name="Cadieu E."/>
            <person name="Center A."/>
            <person name="Chandra I."/>
            <person name="Cherry J.M."/>
            <person name="Cawley S."/>
            <person name="Dahlke C."/>
            <person name="Davenport L.B."/>
            <person name="Davies P."/>
            <person name="de Pablos B."/>
            <person name="Delcher A."/>
            <person name="Deng Z."/>
            <person name="Mays A.D."/>
            <person name="Dew I."/>
            <person name="Dietz S.M."/>
            <person name="Dodson K."/>
            <person name="Doup L.E."/>
            <person name="Downes M."/>
            <person name="Dugan-Rocha S."/>
            <person name="Dunkov B.C."/>
            <person name="Dunn P."/>
            <person name="Durbin K.J."/>
            <person name="Evangelista C.C."/>
            <person name="Ferraz C."/>
            <person name="Ferriera S."/>
            <person name="Fleischmann W."/>
            <person name="Fosler C."/>
            <person name="Gabrielian A.E."/>
            <person name="Garg N.S."/>
            <person name="Gelbart W.M."/>
            <person name="Glasser K."/>
            <person name="Glodek A."/>
            <person name="Gong F."/>
            <person name="Gorrell J.H."/>
            <person name="Gu Z."/>
            <person name="Guan P."/>
            <person name="Harris M."/>
            <person name="Harris N.L."/>
            <person name="Harvey D.A."/>
            <person name="Heiman T.J."/>
            <person name="Hernandez J.R."/>
            <person name="Houck J."/>
            <person name="Hostin D."/>
            <person name="Houston K.A."/>
            <person name="Howland T.J."/>
            <person name="Wei M.-H."/>
            <person name="Ibegwam C."/>
            <person name="Jalali M."/>
            <person name="Kalush F."/>
            <person name="Karpen G.H."/>
            <person name="Ke Z."/>
            <person name="Kennison J.A."/>
            <person name="Ketchum K.A."/>
            <person name="Kimmel B.E."/>
            <person name="Kodira C.D."/>
            <person name="Kraft C.L."/>
            <person name="Kravitz S."/>
            <person name="Kulp D."/>
            <person name="Lai Z."/>
            <person name="Lasko P."/>
            <person name="Lei Y."/>
            <person name="Levitsky A.A."/>
            <person name="Li J.H."/>
            <person name="Li Z."/>
            <person name="Liang Y."/>
            <person name="Lin X."/>
            <person name="Liu X."/>
            <person name="Mattei B."/>
            <person name="McIntosh T.C."/>
            <person name="McLeod M.P."/>
            <person name="McPherson D."/>
            <person name="Merkulov G."/>
            <person name="Milshina N.V."/>
            <person name="Mobarry C."/>
            <person name="Morris J."/>
            <person name="Moshrefi A."/>
            <person name="Mount S.M."/>
            <person name="Moy M."/>
            <person name="Murphy B."/>
            <person name="Murphy L."/>
            <person name="Muzny D.M."/>
            <person name="Nelson D.L."/>
            <person name="Nelson D.R."/>
            <person name="Nelson K.A."/>
            <person name="Nixon K."/>
            <person name="Nusskern D.R."/>
            <person name="Pacleb J.M."/>
            <person name="Palazzolo M."/>
            <person name="Pittman G.S."/>
            <person name="Pan S."/>
            <person name="Pollard J."/>
            <person name="Puri V."/>
            <person name="Reese M.G."/>
            <person name="Reinert K."/>
            <person name="Remington K."/>
            <person name="Saunders R.D.C."/>
            <person name="Scheeler F."/>
            <person name="Shen H."/>
            <person name="Shue B.C."/>
            <person name="Siden-Kiamos I."/>
            <person name="Simpson M."/>
            <person name="Skupski M.P."/>
            <person name="Smith T.J."/>
            <person name="Spier E."/>
            <person name="Spradling A.C."/>
            <person name="Stapleton M."/>
            <person name="Strong R."/>
            <person name="Sun E."/>
            <person name="Svirskas R."/>
            <person name="Tector C."/>
            <person name="Turner R."/>
            <person name="Venter E."/>
            <person name="Wang A.H."/>
            <person name="Wang X."/>
            <person name="Wang Z.-Y."/>
            <person name="Wassarman D.A."/>
            <person name="Weinstock G.M."/>
            <person name="Weissenbach J."/>
            <person name="Williams S.M."/>
            <person name="Woodage T."/>
            <person name="Worley K.C."/>
            <person name="Wu D."/>
            <person name="Yang S."/>
            <person name="Yao Q.A."/>
            <person name="Ye J."/>
            <person name="Yeh R.-F."/>
            <person name="Zaveri J.S."/>
            <person name="Zhan M."/>
            <person name="Zhang G."/>
            <person name="Zhao Q."/>
            <person name="Zheng L."/>
            <person name="Zheng X.H."/>
            <person name="Zhong F.N."/>
            <person name="Zhong W."/>
            <person name="Zhou X."/>
            <person name="Zhu S.C."/>
            <person name="Zhu X."/>
            <person name="Smith H.O."/>
            <person name="Gibbs R.A."/>
            <person name="Myers E.W."/>
            <person name="Rubin G.M."/>
            <person name="Venter J.C."/>
        </authorList>
    </citation>
    <scope>NUCLEOTIDE SEQUENCE [LARGE SCALE GENOMIC DNA]</scope>
    <source>
        <strain>Berkeley</strain>
    </source>
</reference>
<reference key="2">
    <citation type="journal article" date="2002" name="Genome Biol.">
        <title>Annotation of the Drosophila melanogaster euchromatic genome: a systematic review.</title>
        <authorList>
            <person name="Misra S."/>
            <person name="Crosby M.A."/>
            <person name="Mungall C.J."/>
            <person name="Matthews B.B."/>
            <person name="Campbell K.S."/>
            <person name="Hradecky P."/>
            <person name="Huang Y."/>
            <person name="Kaminker J.S."/>
            <person name="Millburn G.H."/>
            <person name="Prochnik S.E."/>
            <person name="Smith C.D."/>
            <person name="Tupy J.L."/>
            <person name="Whitfield E.J."/>
            <person name="Bayraktaroglu L."/>
            <person name="Berman B.P."/>
            <person name="Bettencourt B.R."/>
            <person name="Celniker S.E."/>
            <person name="de Grey A.D.N.J."/>
            <person name="Drysdale R.A."/>
            <person name="Harris N.L."/>
            <person name="Richter J."/>
            <person name="Russo S."/>
            <person name="Schroeder A.J."/>
            <person name="Shu S.Q."/>
            <person name="Stapleton M."/>
            <person name="Yamada C."/>
            <person name="Ashburner M."/>
            <person name="Gelbart W.M."/>
            <person name="Rubin G.M."/>
            <person name="Lewis S.E."/>
        </authorList>
    </citation>
    <scope>GENOME REANNOTATION</scope>
    <source>
        <strain>Berkeley</strain>
    </source>
</reference>
<reference key="3">
    <citation type="submission" date="2004-01" db="EMBL/GenBank/DDBJ databases">
        <authorList>
            <person name="Stapleton M."/>
            <person name="Carlson J.W."/>
            <person name="Chavez C."/>
            <person name="Frise E."/>
            <person name="George R.A."/>
            <person name="Pacleb J.M."/>
            <person name="Park S."/>
            <person name="Wan K.H."/>
            <person name="Yu C."/>
            <person name="Rubin G.M."/>
            <person name="Celniker S.E."/>
        </authorList>
    </citation>
    <scope>NUCLEOTIDE SEQUENCE [LARGE SCALE MRNA]</scope>
    <source>
        <strain>Berkeley</strain>
        <tissue>Embryo</tissue>
    </source>
</reference>
<evidence type="ECO:0000250" key="1"/>
<evidence type="ECO:0000255" key="2">
    <source>
        <dbReference type="PROSITE-ProRule" id="PRU01083"/>
    </source>
</evidence>
<evidence type="ECO:0000305" key="3"/>
<accession>Q9VWA2</accession>
<accession>Q53XF4</accession>
<gene>
    <name type="ORF">CG6951</name>
</gene>
<sequence>MAEVSAQDLISQLSKSPESHKRKEYLHWDDYFMATSLLSAKRSKDPVTQVGACIVDSQNRIVAIGYNGFPRNCSDDVFPWSKAKKGSQEFDPLEDKKMYVVHAEANAILNSNGMSLSGTRLYTTLFPCNECAKLIIQVGISQVLYLSDKYADKPTYRASKRMLDAVGVEYKRHIPQKKTITIDFDTFPEEDPNASLGLNELHL</sequence>
<protein>
    <recommendedName>
        <fullName>Probable deoxycytidylate deaminase</fullName>
        <ecNumber>3.5.4.12</ecNumber>
    </recommendedName>
    <alternativeName>
        <fullName>dCMP deaminase</fullName>
    </alternativeName>
</protein>
<comment type="function">
    <text evidence="1">Supplies the nucleotide substrate for thymidylate synthetase.</text>
</comment>
<comment type="catalytic activity">
    <reaction>
        <text>dCMP + H2O + H(+) = dUMP + NH4(+)</text>
        <dbReference type="Rhea" id="RHEA:22924"/>
        <dbReference type="ChEBI" id="CHEBI:15377"/>
        <dbReference type="ChEBI" id="CHEBI:15378"/>
        <dbReference type="ChEBI" id="CHEBI:28938"/>
        <dbReference type="ChEBI" id="CHEBI:57566"/>
        <dbReference type="ChEBI" id="CHEBI:246422"/>
        <dbReference type="EC" id="3.5.4.12"/>
    </reaction>
</comment>
<comment type="cofactor">
    <cofactor evidence="1">
        <name>Zn(2+)</name>
        <dbReference type="ChEBI" id="CHEBI:29105"/>
    </cofactor>
</comment>
<comment type="similarity">
    <text evidence="3">Belongs to the cytidine and deoxycytidylate deaminase family.</text>
</comment>
<name>DCTD_DROME</name>
<keyword id="KW-0378">Hydrolase</keyword>
<keyword id="KW-0479">Metal-binding</keyword>
<keyword id="KW-0545">Nucleotide biosynthesis</keyword>
<keyword id="KW-1185">Reference proteome</keyword>
<keyword id="KW-0862">Zinc</keyword>
<proteinExistence type="evidence at transcript level"/>
<feature type="chain" id="PRO_0000171696" description="Probable deoxycytidylate deaminase">
    <location>
        <begin position="1"/>
        <end position="203"/>
    </location>
</feature>
<feature type="domain" description="CMP/dCMP-type deaminase" evidence="2">
    <location>
        <begin position="27"/>
        <end position="163"/>
    </location>
</feature>
<feature type="active site" description="Proton donor" evidence="1">
    <location>
        <position position="104"/>
    </location>
</feature>
<feature type="binding site" evidence="1">
    <location>
        <position position="102"/>
    </location>
    <ligand>
        <name>Zn(2+)</name>
        <dbReference type="ChEBI" id="CHEBI:29105"/>
        <note>catalytic</note>
    </ligand>
</feature>
<feature type="binding site" evidence="1">
    <location>
        <position position="128"/>
    </location>
    <ligand>
        <name>Zn(2+)</name>
        <dbReference type="ChEBI" id="CHEBI:29105"/>
        <note>catalytic</note>
    </ligand>
</feature>
<feature type="binding site" evidence="1">
    <location>
        <position position="131"/>
    </location>
    <ligand>
        <name>Zn(2+)</name>
        <dbReference type="ChEBI" id="CHEBI:29105"/>
        <note>catalytic</note>
    </ligand>
</feature>
<organism>
    <name type="scientific">Drosophila melanogaster</name>
    <name type="common">Fruit fly</name>
    <dbReference type="NCBI Taxonomy" id="7227"/>
    <lineage>
        <taxon>Eukaryota</taxon>
        <taxon>Metazoa</taxon>
        <taxon>Ecdysozoa</taxon>
        <taxon>Arthropoda</taxon>
        <taxon>Hexapoda</taxon>
        <taxon>Insecta</taxon>
        <taxon>Pterygota</taxon>
        <taxon>Neoptera</taxon>
        <taxon>Endopterygota</taxon>
        <taxon>Diptera</taxon>
        <taxon>Brachycera</taxon>
        <taxon>Muscomorpha</taxon>
        <taxon>Ephydroidea</taxon>
        <taxon>Drosophilidae</taxon>
        <taxon>Drosophila</taxon>
        <taxon>Sophophora</taxon>
    </lineage>
</organism>